<evidence type="ECO:0000250" key="1"/>
<evidence type="ECO:0000250" key="2">
    <source>
        <dbReference type="UniProtKB" id="P52630"/>
    </source>
</evidence>
<evidence type="ECO:0000255" key="3">
    <source>
        <dbReference type="PROSITE-ProRule" id="PRU00191"/>
    </source>
</evidence>
<evidence type="ECO:0000269" key="4">
    <source>
    </source>
</evidence>
<evidence type="ECO:0000269" key="5">
    <source>
    </source>
</evidence>
<evidence type="ECO:0000305" key="6"/>
<comment type="function">
    <text evidence="2">Signal transducer and activator of transcription that mediates signaling by type I interferons (IFN-alpha and IFN-beta). Following type I IFN binding to cell surface receptors, Jak kinases (TYK2 and JAK1) are activated, leading to tyrosine phosphorylation of STAT1 and STAT2. The phosphorylated STATs dimerize, associate with IRF9/ISGF3G to form a complex termed ISGF3 transcription factor, that enters the nucleus. ISGF3 binds to the IFN stimulated response element (ISRE) to activate the transcription of interferon stimulated genes, which drive the cell in an antiviral state. In addition, also has a negative feedback regulatory role in the type I interferon signaling by recruiting USP18 to the type I IFN receptor subunit IFNAR2 thereby mitigating the response to type I IFNs. Acts as a regulator of mitochondrial fission by modulating the phosphorylation of DNM1L at 'Ser-616' and 'Ser-637' which activate and inactivate the GTPase activity of DNM1L respectively.</text>
</comment>
<comment type="subunit">
    <text evidence="2 4 5">Heterodimer with STAT1 upon IFN-alpha/beta induced phosphorylation. The heterodimer STAT1:STAT2 forms the interferon-stimulated gene factor 3 complex (ISGF3) with IRF9; interacts with IRF9 in the cytoplasm (PubMed:17332413). Interacts with CRSP2 and CRSP6 (By similarity). Can form a homodimer upon IFN-alpha induced phosphorylation. Interacts with IFNAR1 and IFNAR2; the interaction is direct. Interacts with ARL2BP (PubMed:18234692). Interacts with E3 ubiquitin ligase DCST1; the interaction results in STAT2 ubiquitin-mediated proteasomal degradation (By similarity). Interacts with USP18; the interaction is direct and allows the recruitment of USP18 to IFNAR2 (By similarity).</text>
</comment>
<comment type="subcellular location">
    <subcellularLocation>
        <location evidence="2">Cytoplasm</location>
    </subcellularLocation>
    <subcellularLocation>
        <location evidence="2">Nucleus</location>
    </subcellularLocation>
    <text evidence="2">Translocated into the nucleus upon activation by IFN-alpha/beta.</text>
</comment>
<comment type="tissue specificity">
    <text>Found in the brain, lung, heart, spleen, liver, kidney, muscle and the testis.</text>
</comment>
<comment type="PTM">
    <text evidence="1">Tyrosine phosphorylated in response to IFN-alpha.</text>
</comment>
<comment type="PTM">
    <text evidence="2">'Lys-48'-linked ubiquitination by DCST1 leads to STAT2 proteasomal degradation.</text>
</comment>
<comment type="similarity">
    <text evidence="6">Belongs to the transcription factor STAT family.</text>
</comment>
<comment type="sequence caution" evidence="6">
    <conflict type="erroneous gene model prediction">
        <sequence resource="EMBL-CDS" id="AAB36230"/>
    </conflict>
</comment>
<comment type="sequence caution" evidence="6">
    <conflict type="erroneous gene model prediction">
        <sequence resource="EMBL-CDS" id="AAB36231"/>
    </conflict>
</comment>
<feature type="chain" id="PRO_0000182414" description="Signal transducer and activator of transcription 2">
    <location>
        <begin position="1"/>
        <end position="923"/>
    </location>
</feature>
<feature type="domain" description="SH2" evidence="3">
    <location>
        <begin position="571"/>
        <end position="666"/>
    </location>
</feature>
<feature type="region of interest" description="Mediates interaction with USP18" evidence="2">
    <location>
        <begin position="137"/>
        <end position="571"/>
    </location>
</feature>
<feature type="modified residue" description="Phosphoserine" evidence="2">
    <location>
        <position position="284"/>
    </location>
</feature>
<feature type="modified residue" description="Phosphotyrosine; by JAK" evidence="2">
    <location>
        <position position="689"/>
    </location>
</feature>
<feature type="sequence conflict" description="In Ref. 2; AAB36228/AAB36231." evidence="6" ref="2">
    <original>T</original>
    <variation>A</variation>
    <location>
        <position position="596"/>
    </location>
</feature>
<feature type="sequence conflict" description="In Ref. 2; AAB36228." evidence="6" ref="2">
    <original>H</original>
    <variation>D</variation>
    <location>
        <position position="620"/>
    </location>
</feature>
<sequence>MAQWEMLQNLDSPFLDQLHQVYSQSFLPMDFRQHLASWIEDQNWREAALESDDAKANMLYFSILDQLNQWDHYSSDPKSLLLQHNLRKFSRDIQPFPNGPSQLAEMIFNLLLEEQRILIQAQRAQEVQPPPAPEAVVESQQLEIENRIQGLHVDIEFLVRSIRQLKDEQDVFSFRYTVFSLKKTSSSDPHQSQQAHVVQATANKVDRMRKEVLDISKGLVGRLTTLVDLLLPKLDEWKVQQQKSCIGAPPPVKSAAEQLEQWLTAGAKFLFHLRQLLKQLKEMSCLRYQGDMFAKGVDLRNAQVMELLQRLLQRSFVVETQPCMPQTLHRPLILKTGNKFTVRTRLLVRLQEGSESLKAEVSVDRNSDLPGFRKFNILTSNQKTLTPEKGQRQGLIWDFGFLTLVEQRAVGAGKGNNKGPLAVTEELHVISFVVEYTYQGLKMKLQTDTLPVVIISNMNQLSFAWASILWFNMLSPNPKNQQFFCQAPKAPWSLLGPVLSWQFSSYVARGLDSEQLGMLRTKLFGKSCKMEDALLSWVDFCKRESPPGKIPFWTWLDKILELVHDHLKDLWKDGRIMGFVSRNQERRLLKKMLSGTFLLRFSETSEGGITCSWVEHQDDHKVEIYSVQPYTKEVLQSLPLTEIIRHYQVLAEENIPENPLRFLYPRIPRDEAFGCYYQEKVNLEEQEEYLKHKLIVISNRQVDELQQPLELKQDSESLEVNAELLLAHDQELPLMMQTGLVLGTELKVDPILSTAPQVLLEPAPQVLLEPAPQVLLEPAPQVLLEPAPQVLLEPAPQVLLEPAPQVLLEPAPQVQLEPAPQVLLELAPQVLLEPAPQVLLELAPQVQLEPAHLLQQPSESDLPEDLQQISVEDLKKLSNPSTEYITTNENPMLAGESSGDETSIPYHSHFDADGLLGWTLDTF</sequence>
<accession>Q9WVL2</accession>
<accession>Q64188</accession>
<accession>Q64189</accession>
<accession>Q64250</accession>
<organism>
    <name type="scientific">Mus musculus</name>
    <name type="common">Mouse</name>
    <dbReference type="NCBI Taxonomy" id="10090"/>
    <lineage>
        <taxon>Eukaryota</taxon>
        <taxon>Metazoa</taxon>
        <taxon>Chordata</taxon>
        <taxon>Craniata</taxon>
        <taxon>Vertebrata</taxon>
        <taxon>Euteleostomi</taxon>
        <taxon>Mammalia</taxon>
        <taxon>Eutheria</taxon>
        <taxon>Euarchontoglires</taxon>
        <taxon>Glires</taxon>
        <taxon>Rodentia</taxon>
        <taxon>Myomorpha</taxon>
        <taxon>Muroidea</taxon>
        <taxon>Muridae</taxon>
        <taxon>Murinae</taxon>
        <taxon>Mus</taxon>
        <taxon>Mus</taxon>
    </lineage>
</organism>
<reference key="1">
    <citation type="submission" date="1998-08" db="EMBL/GenBank/DDBJ databases">
        <title>Molecular cloning and characterization of murine Stat2.</title>
        <authorList>
            <person name="Paulson M.S."/>
            <person name="Mui A."/>
            <person name="Levy D.E."/>
        </authorList>
    </citation>
    <scope>NUCLEOTIDE SEQUENCE [MRNA]</scope>
    <source>
        <strain>CD-1</strain>
    </source>
</reference>
<reference key="2">
    <citation type="journal article" date="1996" name="FEBS Lett.">
        <title>Identification of alternative splicing form of Stat2.</title>
        <authorList>
            <person name="Sugiyama T."/>
            <person name="Nishio Y."/>
            <person name="Kishimoto T."/>
            <person name="Akira S."/>
        </authorList>
    </citation>
    <scope>NUCLEOTIDE SEQUENCE [GENOMIC DNA] OF 595-658</scope>
</reference>
<reference key="3">
    <citation type="journal article" date="2007" name="Science">
        <title>Multiple functions of the IKK-related kinase IKKepsilon in interferon-mediated antiviral immunity.</title>
        <authorList>
            <person name="Tenoever B.R."/>
            <person name="Ng S.L."/>
            <person name="Chua M.A."/>
            <person name="McWhirter S.M."/>
            <person name="Garcia-Sastre A."/>
            <person name="Maniatis T."/>
        </authorList>
    </citation>
    <scope>IDENTIFICATION IN THE ISGF3 COMPLEX</scope>
</reference>
<reference key="4">
    <citation type="journal article" date="2008" name="Int. Immunol.">
        <title>BART is essential for nuclear retention of STAT3.</title>
        <authorList>
            <person name="Muromoto R."/>
            <person name="Sekine Y."/>
            <person name="Imoto S."/>
            <person name="Ikeda O."/>
            <person name="Okayama T."/>
            <person name="Sato N."/>
            <person name="Matsuda T."/>
        </authorList>
    </citation>
    <scope>INTERACTION WITH ARL2BP</scope>
</reference>
<reference key="5">
    <citation type="journal article" date="2010" name="Cell">
        <title>A tissue-specific atlas of mouse protein phosphorylation and expression.</title>
        <authorList>
            <person name="Huttlin E.L."/>
            <person name="Jedrychowski M.P."/>
            <person name="Elias J.E."/>
            <person name="Goswami T."/>
            <person name="Rad R."/>
            <person name="Beausoleil S.A."/>
            <person name="Villen J."/>
            <person name="Haas W."/>
            <person name="Sowa M.E."/>
            <person name="Gygi S.P."/>
        </authorList>
    </citation>
    <scope>IDENTIFICATION BY MASS SPECTROMETRY [LARGE SCALE ANALYSIS]</scope>
    <source>
        <tissue>Brain</tissue>
        <tissue>Liver</tissue>
        <tissue>Lung</tissue>
        <tissue>Pancreas</tissue>
        <tissue>Spleen</tissue>
    </source>
</reference>
<keyword id="KW-0010">Activator</keyword>
<keyword id="KW-0963">Cytoplasm</keyword>
<keyword id="KW-0238">DNA-binding</keyword>
<keyword id="KW-0539">Nucleus</keyword>
<keyword id="KW-0597">Phosphoprotein</keyword>
<keyword id="KW-1185">Reference proteome</keyword>
<keyword id="KW-0727">SH2 domain</keyword>
<keyword id="KW-0804">Transcription</keyword>
<keyword id="KW-0805">Transcription regulation</keyword>
<keyword id="KW-0832">Ubl conjugation</keyword>
<name>STAT2_MOUSE</name>
<gene>
    <name type="primary">Stat2</name>
</gene>
<proteinExistence type="evidence at protein level"/>
<protein>
    <recommendedName>
        <fullName>Signal transducer and activator of transcription 2</fullName>
    </recommendedName>
</protein>
<dbReference type="EMBL" id="AF088862">
    <property type="protein sequence ID" value="AAD38329.1"/>
    <property type="molecule type" value="mRNA"/>
</dbReference>
<dbReference type="EMBL" id="S81342">
    <property type="protein sequence ID" value="AAB36228.2"/>
    <property type="molecule type" value="Genomic_DNA"/>
</dbReference>
<dbReference type="EMBL" id="S81342">
    <property type="protein sequence ID" value="AAB36230.1"/>
    <property type="status" value="ALT_SEQ"/>
    <property type="molecule type" value="Genomic_DNA"/>
</dbReference>
<dbReference type="EMBL" id="S81342">
    <property type="protein sequence ID" value="AAB36231.1"/>
    <property type="status" value="ALT_SEQ"/>
    <property type="molecule type" value="Genomic_DNA"/>
</dbReference>
<dbReference type="PIR" id="S63681">
    <property type="entry name" value="S63681"/>
</dbReference>
<dbReference type="PIR" id="S63682">
    <property type="entry name" value="S63682"/>
</dbReference>
<dbReference type="SMR" id="Q9WVL2"/>
<dbReference type="FunCoup" id="Q9WVL2">
    <property type="interactions" value="602"/>
</dbReference>
<dbReference type="STRING" id="10090.ENSMUSP00000082855"/>
<dbReference type="iPTMnet" id="Q9WVL2"/>
<dbReference type="PhosphoSitePlus" id="Q9WVL2"/>
<dbReference type="PaxDb" id="10090-ENSMUSP00000100872"/>
<dbReference type="PeptideAtlas" id="Q9WVL2"/>
<dbReference type="ProteomicsDB" id="258658"/>
<dbReference type="Pumba" id="Q9WVL2"/>
<dbReference type="AGR" id="MGI:103039"/>
<dbReference type="MGI" id="MGI:103039">
    <property type="gene designation" value="Stat2"/>
</dbReference>
<dbReference type="eggNOG" id="KOG3667">
    <property type="taxonomic scope" value="Eukaryota"/>
</dbReference>
<dbReference type="InParanoid" id="Q9WVL2"/>
<dbReference type="PhylomeDB" id="Q9WVL2"/>
<dbReference type="Reactome" id="R-MMU-8854691">
    <property type="pathway name" value="Interleukin-20 family signaling"/>
</dbReference>
<dbReference type="Reactome" id="R-MMU-909733">
    <property type="pathway name" value="Interferon alpha/beta signaling"/>
</dbReference>
<dbReference type="Reactome" id="R-MMU-912694">
    <property type="pathway name" value="Regulation of IFNA/IFNB signaling"/>
</dbReference>
<dbReference type="ChiTaRS" id="Stat2">
    <property type="organism name" value="mouse"/>
</dbReference>
<dbReference type="PRO" id="PR:Q9WVL2"/>
<dbReference type="Proteomes" id="UP000000589">
    <property type="component" value="Unplaced"/>
</dbReference>
<dbReference type="RNAct" id="Q9WVL2">
    <property type="molecule type" value="protein"/>
</dbReference>
<dbReference type="GO" id="GO:0005737">
    <property type="term" value="C:cytoplasm"/>
    <property type="evidence" value="ECO:0000314"/>
    <property type="project" value="MGI"/>
</dbReference>
<dbReference type="GO" id="GO:0005634">
    <property type="term" value="C:nucleus"/>
    <property type="evidence" value="ECO:0000314"/>
    <property type="project" value="MGI"/>
</dbReference>
<dbReference type="GO" id="GO:0003677">
    <property type="term" value="F:DNA binding"/>
    <property type="evidence" value="ECO:0007669"/>
    <property type="project" value="UniProtKB-KW"/>
</dbReference>
<dbReference type="GO" id="GO:0003700">
    <property type="term" value="F:DNA-binding transcription factor activity"/>
    <property type="evidence" value="ECO:0007669"/>
    <property type="project" value="InterPro"/>
</dbReference>
<dbReference type="GO" id="GO:0051607">
    <property type="term" value="P:defense response to virus"/>
    <property type="evidence" value="ECO:0000250"/>
    <property type="project" value="UniProtKB"/>
</dbReference>
<dbReference type="GO" id="GO:0060339">
    <property type="term" value="P:negative regulation of type I interferon-mediated signaling pathway"/>
    <property type="evidence" value="ECO:0000315"/>
    <property type="project" value="UniProtKB"/>
</dbReference>
<dbReference type="GO" id="GO:0090140">
    <property type="term" value="P:regulation of mitochondrial fission"/>
    <property type="evidence" value="ECO:0000250"/>
    <property type="project" value="UniProtKB"/>
</dbReference>
<dbReference type="GO" id="GO:0001932">
    <property type="term" value="P:regulation of protein phosphorylation"/>
    <property type="evidence" value="ECO:0000250"/>
    <property type="project" value="UniProtKB"/>
</dbReference>
<dbReference type="GO" id="GO:0060337">
    <property type="term" value="P:type I interferon-mediated signaling pathway"/>
    <property type="evidence" value="ECO:0000315"/>
    <property type="project" value="UniProtKB"/>
</dbReference>
<dbReference type="CDD" id="cd10373">
    <property type="entry name" value="SH2_STAT2"/>
    <property type="match status" value="1"/>
</dbReference>
<dbReference type="FunFam" id="1.10.238.10:FF:000012">
    <property type="entry name" value="Signal transducer and activator of transcription"/>
    <property type="match status" value="1"/>
</dbReference>
<dbReference type="FunFam" id="1.10.532.10:FF:000003">
    <property type="entry name" value="Signal transducer and activator of transcription"/>
    <property type="match status" value="1"/>
</dbReference>
<dbReference type="FunFam" id="1.20.1050.20:FF:000001">
    <property type="entry name" value="Signal transducer and activator of transcription"/>
    <property type="match status" value="1"/>
</dbReference>
<dbReference type="FunFam" id="2.60.40.630:FF:000004">
    <property type="entry name" value="Signal transducer and activator of transcription"/>
    <property type="match status" value="1"/>
</dbReference>
<dbReference type="FunFam" id="3.30.505.10:FF:000003">
    <property type="entry name" value="Signal transducer and activator of transcription"/>
    <property type="match status" value="1"/>
</dbReference>
<dbReference type="Gene3D" id="1.10.238.10">
    <property type="entry name" value="EF-hand"/>
    <property type="match status" value="1"/>
</dbReference>
<dbReference type="Gene3D" id="3.30.505.10">
    <property type="entry name" value="SH2 domain"/>
    <property type="match status" value="1"/>
</dbReference>
<dbReference type="Gene3D" id="1.20.1050.20">
    <property type="entry name" value="STAT transcription factor, all-alpha domain"/>
    <property type="match status" value="1"/>
</dbReference>
<dbReference type="Gene3D" id="2.60.40.630">
    <property type="entry name" value="STAT transcription factor, DNA-binding domain"/>
    <property type="match status" value="1"/>
</dbReference>
<dbReference type="Gene3D" id="1.10.532.10">
    <property type="entry name" value="STAT transcription factor, N-terminal domain"/>
    <property type="match status" value="1"/>
</dbReference>
<dbReference type="InterPro" id="IPR008967">
    <property type="entry name" value="p53-like_TF_DNA-bd_sf"/>
</dbReference>
<dbReference type="InterPro" id="IPR000980">
    <property type="entry name" value="SH2"/>
</dbReference>
<dbReference type="InterPro" id="IPR036860">
    <property type="entry name" value="SH2_dom_sf"/>
</dbReference>
<dbReference type="InterPro" id="IPR001217">
    <property type="entry name" value="STAT"/>
</dbReference>
<dbReference type="InterPro" id="IPR022756">
    <property type="entry name" value="STAT2_C"/>
</dbReference>
<dbReference type="InterPro" id="IPR035854">
    <property type="entry name" value="STAT2_SH2"/>
</dbReference>
<dbReference type="InterPro" id="IPR048988">
    <property type="entry name" value="STAT_linker"/>
</dbReference>
<dbReference type="InterPro" id="IPR036535">
    <property type="entry name" value="STAT_N_sf"/>
</dbReference>
<dbReference type="InterPro" id="IPR013800">
    <property type="entry name" value="STAT_TF_alpha"/>
</dbReference>
<dbReference type="InterPro" id="IPR015988">
    <property type="entry name" value="STAT_TF_coiled-coil"/>
</dbReference>
<dbReference type="InterPro" id="IPR013801">
    <property type="entry name" value="STAT_TF_DNA-bd"/>
</dbReference>
<dbReference type="InterPro" id="IPR012345">
    <property type="entry name" value="STAT_TF_DNA-bd_N"/>
</dbReference>
<dbReference type="InterPro" id="IPR013799">
    <property type="entry name" value="STAT_TF_prot_interaction"/>
</dbReference>
<dbReference type="PANTHER" id="PTHR11801">
    <property type="entry name" value="SIGNAL TRANSDUCER AND ACTIVATOR OF TRANSCRIPTION"/>
    <property type="match status" value="1"/>
</dbReference>
<dbReference type="Pfam" id="PF00017">
    <property type="entry name" value="SH2"/>
    <property type="match status" value="1"/>
</dbReference>
<dbReference type="Pfam" id="PF12188">
    <property type="entry name" value="STAT2_C"/>
    <property type="match status" value="1"/>
</dbReference>
<dbReference type="Pfam" id="PF01017">
    <property type="entry name" value="STAT_alpha"/>
    <property type="match status" value="1"/>
</dbReference>
<dbReference type="Pfam" id="PF02864">
    <property type="entry name" value="STAT_bind"/>
    <property type="match status" value="1"/>
</dbReference>
<dbReference type="Pfam" id="PF02865">
    <property type="entry name" value="STAT_int"/>
    <property type="match status" value="1"/>
</dbReference>
<dbReference type="Pfam" id="PF21354">
    <property type="entry name" value="STAT_linker"/>
    <property type="match status" value="1"/>
</dbReference>
<dbReference type="SMART" id="SM00252">
    <property type="entry name" value="SH2"/>
    <property type="match status" value="1"/>
</dbReference>
<dbReference type="SMART" id="SM00964">
    <property type="entry name" value="STAT_int"/>
    <property type="match status" value="1"/>
</dbReference>
<dbReference type="SUPFAM" id="SSF49417">
    <property type="entry name" value="p53-like transcription factors"/>
    <property type="match status" value="1"/>
</dbReference>
<dbReference type="SUPFAM" id="SSF55550">
    <property type="entry name" value="SH2 domain"/>
    <property type="match status" value="1"/>
</dbReference>
<dbReference type="SUPFAM" id="SSF47655">
    <property type="entry name" value="STAT"/>
    <property type="match status" value="1"/>
</dbReference>
<dbReference type="SUPFAM" id="SSF48092">
    <property type="entry name" value="Transcription factor STAT-4 N-domain"/>
    <property type="match status" value="1"/>
</dbReference>
<dbReference type="PROSITE" id="PS50001">
    <property type="entry name" value="SH2"/>
    <property type="match status" value="1"/>
</dbReference>